<organism>
    <name type="scientific">Aliarcobacter butzleri (strain RM4018)</name>
    <name type="common">Arcobacter butzleri</name>
    <dbReference type="NCBI Taxonomy" id="367737"/>
    <lineage>
        <taxon>Bacteria</taxon>
        <taxon>Pseudomonadati</taxon>
        <taxon>Campylobacterota</taxon>
        <taxon>Epsilonproteobacteria</taxon>
        <taxon>Campylobacterales</taxon>
        <taxon>Arcobacteraceae</taxon>
        <taxon>Aliarcobacter</taxon>
    </lineage>
</organism>
<gene>
    <name evidence="1" type="primary">rplW</name>
    <name type="ordered locus">Abu_0754</name>
</gene>
<accession>A8ESU5</accession>
<dbReference type="EMBL" id="CP000361">
    <property type="protein sequence ID" value="ABV67019.1"/>
    <property type="molecule type" value="Genomic_DNA"/>
</dbReference>
<dbReference type="RefSeq" id="WP_004510822.1">
    <property type="nucleotide sequence ID" value="NC_009850.1"/>
</dbReference>
<dbReference type="SMR" id="A8ESU5"/>
<dbReference type="STRING" id="367737.Abu_0754"/>
<dbReference type="GeneID" id="24303921"/>
<dbReference type="KEGG" id="abu:Abu_0754"/>
<dbReference type="eggNOG" id="COG0089">
    <property type="taxonomic scope" value="Bacteria"/>
</dbReference>
<dbReference type="HOGENOM" id="CLU_037562_3_1_7"/>
<dbReference type="Proteomes" id="UP000001136">
    <property type="component" value="Chromosome"/>
</dbReference>
<dbReference type="GO" id="GO:1990904">
    <property type="term" value="C:ribonucleoprotein complex"/>
    <property type="evidence" value="ECO:0007669"/>
    <property type="project" value="UniProtKB-KW"/>
</dbReference>
<dbReference type="GO" id="GO:0005840">
    <property type="term" value="C:ribosome"/>
    <property type="evidence" value="ECO:0007669"/>
    <property type="project" value="UniProtKB-KW"/>
</dbReference>
<dbReference type="GO" id="GO:0019843">
    <property type="term" value="F:rRNA binding"/>
    <property type="evidence" value="ECO:0007669"/>
    <property type="project" value="UniProtKB-UniRule"/>
</dbReference>
<dbReference type="GO" id="GO:0003735">
    <property type="term" value="F:structural constituent of ribosome"/>
    <property type="evidence" value="ECO:0007669"/>
    <property type="project" value="InterPro"/>
</dbReference>
<dbReference type="GO" id="GO:0006412">
    <property type="term" value="P:translation"/>
    <property type="evidence" value="ECO:0007669"/>
    <property type="project" value="UniProtKB-UniRule"/>
</dbReference>
<dbReference type="Gene3D" id="3.30.70.330">
    <property type="match status" value="1"/>
</dbReference>
<dbReference type="HAMAP" id="MF_01369_B">
    <property type="entry name" value="Ribosomal_uL23_B"/>
    <property type="match status" value="1"/>
</dbReference>
<dbReference type="InterPro" id="IPR012677">
    <property type="entry name" value="Nucleotide-bd_a/b_plait_sf"/>
</dbReference>
<dbReference type="InterPro" id="IPR013025">
    <property type="entry name" value="Ribosomal_uL23-like"/>
</dbReference>
<dbReference type="InterPro" id="IPR012678">
    <property type="entry name" value="Ribosomal_uL23/eL15/eS24_sf"/>
</dbReference>
<dbReference type="NCBIfam" id="NF004362">
    <property type="entry name" value="PRK05738.2-2"/>
    <property type="match status" value="1"/>
</dbReference>
<dbReference type="Pfam" id="PF00276">
    <property type="entry name" value="Ribosomal_L23"/>
    <property type="match status" value="1"/>
</dbReference>
<dbReference type="SUPFAM" id="SSF54189">
    <property type="entry name" value="Ribosomal proteins S24e, L23 and L15e"/>
    <property type="match status" value="1"/>
</dbReference>
<feature type="chain" id="PRO_1000068038" description="Large ribosomal subunit protein uL23">
    <location>
        <begin position="1"/>
        <end position="93"/>
    </location>
</feature>
<protein>
    <recommendedName>
        <fullName evidence="1">Large ribosomal subunit protein uL23</fullName>
    </recommendedName>
    <alternativeName>
        <fullName evidence="2">50S ribosomal protein L23</fullName>
    </alternativeName>
</protein>
<reference key="1">
    <citation type="journal article" date="2007" name="PLoS ONE">
        <title>The complete genome sequence and analysis of the Epsilonproteobacterium Arcobacter butzleri.</title>
        <authorList>
            <person name="Miller W.G."/>
            <person name="Parker C.T."/>
            <person name="Rubenfield M."/>
            <person name="Mendz G.L."/>
            <person name="Woesten M.M.S.M."/>
            <person name="Ussery D.W."/>
            <person name="Stolz J.F."/>
            <person name="Binnewies T.T."/>
            <person name="Hallin P.F."/>
            <person name="Wang G."/>
            <person name="Malek J.A."/>
            <person name="Rogosin A."/>
            <person name="Stanker L.H."/>
            <person name="Mandrell R.E."/>
        </authorList>
    </citation>
    <scope>NUCLEOTIDE SEQUENCE [LARGE SCALE GENOMIC DNA]</scope>
    <source>
        <strain>RM4018</strain>
    </source>
</reference>
<keyword id="KW-1185">Reference proteome</keyword>
<keyword id="KW-0687">Ribonucleoprotein</keyword>
<keyword id="KW-0689">Ribosomal protein</keyword>
<keyword id="KW-0694">RNA-binding</keyword>
<keyword id="KW-0699">rRNA-binding</keyword>
<proteinExistence type="inferred from homology"/>
<evidence type="ECO:0000255" key="1">
    <source>
        <dbReference type="HAMAP-Rule" id="MF_01369"/>
    </source>
</evidence>
<evidence type="ECO:0000305" key="2"/>
<sequence length="93" mass="10409">MADITDIKAILYTEKTIELQENGVIVVQTSPRMTKNGLKEVFKEYFGVTPSKVNSLRQDGKVKRFRGKIGKRADFKKFYVTLPEGAAIANLSA</sequence>
<comment type="function">
    <text evidence="1">One of the early assembly proteins it binds 23S rRNA. One of the proteins that surrounds the polypeptide exit tunnel on the outside of the ribosome. Forms the main docking site for trigger factor binding to the ribosome.</text>
</comment>
<comment type="subunit">
    <text evidence="1">Part of the 50S ribosomal subunit. Contacts protein L29, and trigger factor when it is bound to the ribosome.</text>
</comment>
<comment type="similarity">
    <text evidence="1">Belongs to the universal ribosomal protein uL23 family.</text>
</comment>
<name>RL23_ALIB4</name>